<evidence type="ECO:0000250" key="1"/>
<evidence type="ECO:0000250" key="2">
    <source>
        <dbReference type="UniProtKB" id="P00813"/>
    </source>
</evidence>
<evidence type="ECO:0000250" key="3">
    <source>
        <dbReference type="UniProtKB" id="P03958"/>
    </source>
</evidence>
<evidence type="ECO:0000269" key="4">
    <source>
    </source>
</evidence>
<evidence type="ECO:0000269" key="5">
    <source>
    </source>
</evidence>
<evidence type="ECO:0000269" key="6">
    <source>
    </source>
</evidence>
<evidence type="ECO:0000269" key="7">
    <source>
    </source>
</evidence>
<evidence type="ECO:0000269" key="8">
    <source>
    </source>
</evidence>
<evidence type="ECO:0000269" key="9">
    <source>
    </source>
</evidence>
<evidence type="ECO:0000269" key="10">
    <source>
    </source>
</evidence>
<evidence type="ECO:0000269" key="11">
    <source>
    </source>
</evidence>
<evidence type="ECO:0000269" key="12">
    <source>
    </source>
</evidence>
<evidence type="ECO:0000269" key="13">
    <source>
    </source>
</evidence>
<evidence type="ECO:0000269" key="14">
    <source>
    </source>
</evidence>
<evidence type="ECO:0000305" key="15"/>
<evidence type="ECO:0007744" key="16">
    <source>
        <dbReference type="PDB" id="1KRM"/>
    </source>
</evidence>
<evidence type="ECO:0007744" key="17">
    <source>
        <dbReference type="PDB" id="1NDV"/>
    </source>
</evidence>
<evidence type="ECO:0007744" key="18">
    <source>
        <dbReference type="PDB" id="1NDW"/>
    </source>
</evidence>
<evidence type="ECO:0007744" key="19">
    <source>
        <dbReference type="PDB" id="1NDY"/>
    </source>
</evidence>
<evidence type="ECO:0007744" key="20">
    <source>
        <dbReference type="PDB" id="1NDZ"/>
    </source>
</evidence>
<evidence type="ECO:0007744" key="21">
    <source>
        <dbReference type="PDB" id="1O5R"/>
    </source>
</evidence>
<evidence type="ECO:0007744" key="22">
    <source>
        <dbReference type="PDB" id="1QXL"/>
    </source>
</evidence>
<evidence type="ECO:0007744" key="23">
    <source>
        <dbReference type="PDB" id="1VFL"/>
    </source>
</evidence>
<evidence type="ECO:0007744" key="24">
    <source>
        <dbReference type="PDB" id="1WXY"/>
    </source>
</evidence>
<evidence type="ECO:0007829" key="25">
    <source>
        <dbReference type="PDB" id="1NDY"/>
    </source>
</evidence>
<evidence type="ECO:0007829" key="26">
    <source>
        <dbReference type="PDB" id="1QXL"/>
    </source>
</evidence>
<evidence type="ECO:0007829" key="27">
    <source>
        <dbReference type="PDB" id="1VFL"/>
    </source>
</evidence>
<gene>
    <name type="primary">ADA</name>
</gene>
<sequence length="363" mass="40919">MAQTPAFNKPKVELHVHLDGAIKPETILYYGRKRGIALPADTPEELQNIIGMDKPLSLPEFLAKFDYYMPAIAGCREAVKRIAYEFVEMKAKDGVVYVEVRYSPHLLANSKVEPIPWNQAEGDLTPDEVVSLVNQGLQEGERDFGVKVRSILCCMRHQPSWSSEVVELCKKYREQTVVAIDLAGDETIEGSSLFPGHVKAYAEAVKSGVHRTVHAGEVGSANVVKEAVDTLKTERLGHGYHTLEDATLYNRLRQENMHFEVCPWSSYLTGAWKPDTEHPVVRFKNDQVNYSLNTDDPLIFKSTLDTDYQMTKNEMGFTEEEFKRLNINAAKSSFLPEDEKKELLDLLYKAYGMPSPASAEQCL</sequence>
<reference key="1">
    <citation type="journal article" date="2000" name="J. Exp. Med.">
        <title>The binding site of human adenosine deaminase for CD26/dipeptidyl peptidase IV: the Arg142Gln mutation impairs binding to CD26 but does not cause immune deficiency.</title>
        <authorList>
            <person name="Richard E."/>
            <person name="Arredondo-Vega F.X."/>
            <person name="Santisteban I."/>
            <person name="Kelly S.J."/>
            <person name="Patel D.D."/>
            <person name="Hershfield M.S."/>
        </authorList>
    </citation>
    <scope>NUCLEOTIDE SEQUENCE [MRNA]</scope>
</reference>
<reference key="2">
    <citation type="journal article" date="1996" name="J. Pharm. Biomed. Anal.">
        <title>Primary structure of bovine adenosine deaminase.</title>
        <authorList>
            <person name="Kelly M.A."/>
            <person name="Vestling M.M."/>
            <person name="Murphy C.M."/>
            <person name="Hua S."/>
            <person name="Sumpter T."/>
            <person name="Fenselau C."/>
        </authorList>
    </citation>
    <scope>PROTEIN SEQUENCE OF 2-357</scope>
    <scope>MASS SPECTROMETRY</scope>
</reference>
<reference key="3">
    <citation type="journal article" date="2012" name="PLoS ONE">
        <title>Adenosine deaminase enhances the immunogenicity of human dendritic cells from healthy and HIV-infected individuals.</title>
        <authorList>
            <person name="Casanova V."/>
            <person name="Naval-Macabuhay I."/>
            <person name="Massanella M."/>
            <person name="Rodriguez-Garcia M."/>
            <person name="Blanco J."/>
            <person name="Gatell J.M."/>
            <person name="Garcia F."/>
            <person name="Gallart T."/>
            <person name="Lluis C."/>
            <person name="Mallol J."/>
            <person name="Franco R."/>
            <person name="Climent N."/>
            <person name="McCormick P.J."/>
        </authorList>
    </citation>
    <scope>FUNCTION</scope>
    <scope>TISSUE SPECIFICITY</scope>
</reference>
<reference key="4">
    <citation type="journal article" date="2003" name="Acta Crystallogr. D">
        <title>Structure of bovine adenosine deaminase complexed with 6-hydroxy-1,6-dihydropurine riboside.</title>
        <authorList>
            <person name="Kinoshita T."/>
            <person name="Nishio N."/>
            <person name="Nakanishi I."/>
            <person name="Sato A."/>
            <person name="Fujii T."/>
        </authorList>
    </citation>
    <scope>X-RAY CRYSTALLOGRAPHY (2.50 ANGSTROMS) OF 2-356 IN COMPLEX WITH ZINC IONS AND TRANSITION STATE ANALOG 6-HYDROXY-1,6-DIHYDROPURINE RIBOSIDE</scope>
</reference>
<reference key="5">
    <citation type="journal article" date="2004" name="J. Am. Chem. Soc.">
        <title>A highly potent non-nucleoside adenosine deaminase inhibitor: efficient drug discovery by intentional lead hybridization.</title>
        <authorList>
            <person name="Terasaka T."/>
            <person name="Kinoshita T."/>
            <person name="Kuno M."/>
            <person name="Nakanishi I."/>
        </authorList>
    </citation>
    <scope>X-RAY CRYSTALLOGRAPHY (2.00 ANGSTROMS) OF 2-356 IN COMPLEX WITH INHIBITOR AND ZINC IONS</scope>
</reference>
<reference key="6">
    <citation type="journal article" date="2004" name="J. Biol. Chem.">
        <title>Crystal structure of CD26/dipeptidyl-peptidase IV in complex with adenosine deaminase reveals a highly amphiphilic interface.</title>
        <authorList>
            <person name="Weihofen W.A."/>
            <person name="Liu J."/>
            <person name="Reutter W."/>
            <person name="Saenger W."/>
            <person name="Fan H."/>
        </authorList>
    </citation>
    <scope>X-RAY CRYSTALLOGRAPHY (3.03 ANGSTROMS) OF 1-357 IN COMPLEX WITH ZINC IONS AND DPP4</scope>
    <scope>SUBUNIT</scope>
</reference>
<reference key="7">
    <citation type="journal article" date="2004" name="J. Med. Chem.">
        <title>Structure-based design and synthesis of non-nucleoside, potent, and orally bioavailable adenosine deaminase inhibitors.</title>
        <authorList>
            <person name="Terasaka T."/>
            <person name="Okumura H."/>
            <person name="Tsuji K."/>
            <person name="Kato T."/>
            <person name="Nakanishi I."/>
            <person name="Kinoshita T."/>
            <person name="Kato Y."/>
            <person name="Kuno M."/>
            <person name="Seki N."/>
            <person name="Naoe Y."/>
            <person name="Inoue T."/>
            <person name="Tanaka K."/>
            <person name="Nakamura K."/>
        </authorList>
    </citation>
    <scope>X-RAY CRYSTALLOGRAPHY (2.50 ANGSTROMS) OF 2-356 IN COMPLEX WITH INHIBITOR</scope>
</reference>
<reference key="8">
    <citation type="journal article" date="2004" name="J. Med. Chem.">
        <title>Structure-based design, synthesis, and structure-activity relationship studies of novel non-nucleoside adenosine deaminase inhibitors.</title>
        <authorList>
            <person name="Terasaka T."/>
            <person name="Kinoshita T."/>
            <person name="Kuno M."/>
            <person name="Seki N."/>
            <person name="Tanaka K."/>
            <person name="Nakanishi I."/>
        </authorList>
    </citation>
    <scope>X-RAY CRYSTALLOGRAPHY (2.25 ANGSTROMS) OF 2-356 IN COMPLEX WITH INHIBITOR</scope>
</reference>
<reference key="9">
    <citation type="journal article" date="2005" name="Biochemistry">
        <title>Structural basis of compound recognition by adenosine deaminase.</title>
        <authorList>
            <person name="Kinoshita T."/>
            <person name="Nakanishi I."/>
            <person name="Terasaka T."/>
            <person name="Kuno M."/>
            <person name="Seki N."/>
            <person name="Warizaya M."/>
            <person name="Matsumura H."/>
            <person name="Inoue T."/>
            <person name="Takano K."/>
            <person name="Adachi H."/>
            <person name="Mori Y."/>
            <person name="Fujii T."/>
        </authorList>
    </citation>
    <scope>X-RAY CRYSTALLOGRAPHY (1.80 ANGSTROMS) OF 2-356 IN COMPLEX WITH INHIBITOR</scope>
</reference>
<reference key="10">
    <citation type="journal article" date="2005" name="J. Biol. Chem.">
        <title>Crystal structures of HIV-1 Tat-derived nonapeptides Tat-(1-9) and Trp2-Tat-(1-9) bound to the active site of dipeptidyl-peptidase IV (CD26).</title>
        <authorList>
            <person name="Weihofen W.A."/>
            <person name="Liu J."/>
            <person name="Reutter W."/>
            <person name="Saenger W."/>
            <person name="Fan H."/>
        </authorList>
    </citation>
    <scope>X-RAY CRYSTALLOGRAPHY (3.15 ANGSTROMS) OF 2-362 IN COMPLEX WITH DPP4 AND A HIV-1 TAT PEPTIDE</scope>
</reference>
<reference key="11">
    <citation type="journal article" date="2005" name="J. Med. Chem.">
        <title>Rational design of non-nucleoside, potent, and orally bioavailable adenosine deaminase inhibitors: predicting enzyme conformational change and metabolism.</title>
        <authorList>
            <person name="Terasaka T."/>
            <person name="Tsuji K."/>
            <person name="Kato T."/>
            <person name="Nakanishi I."/>
            <person name="Kinoshita T."/>
            <person name="Kato Y."/>
            <person name="Kuno M."/>
            <person name="Inoue T."/>
            <person name="Tanaka K."/>
            <person name="Nakamura K."/>
        </authorList>
    </citation>
    <scope>X-RAY CRYSTALLOGRAPHY (2.80 ANGSTROMS) OF 2-356 IN COMPLEX WITH INHIBITOR AND ZINC IONS</scope>
</reference>
<reference key="12">
    <citation type="journal article" date="2008" name="Biochem. Biophys. Res. Commun.">
        <title>Conformational change of adenosine deaminase during ligand-exchange in a crystal.</title>
        <authorList>
            <person name="Kinoshita T."/>
            <person name="Tada T."/>
            <person name="Nakanishi I."/>
        </authorList>
    </citation>
    <scope>X-RAY CRYSTALLOGRAPHY (2.52 ANGSTROMS) OF 2-357 IN COMPLEX WITH EHNA</scope>
</reference>
<organism>
    <name type="scientific">Bos taurus</name>
    <name type="common">Bovine</name>
    <dbReference type="NCBI Taxonomy" id="9913"/>
    <lineage>
        <taxon>Eukaryota</taxon>
        <taxon>Metazoa</taxon>
        <taxon>Chordata</taxon>
        <taxon>Craniata</taxon>
        <taxon>Vertebrata</taxon>
        <taxon>Euteleostomi</taxon>
        <taxon>Mammalia</taxon>
        <taxon>Eutheria</taxon>
        <taxon>Laurasiatheria</taxon>
        <taxon>Artiodactyla</taxon>
        <taxon>Ruminantia</taxon>
        <taxon>Pecora</taxon>
        <taxon>Bovidae</taxon>
        <taxon>Bovinae</taxon>
        <taxon>Bos</taxon>
    </lineage>
</organism>
<comment type="function">
    <text evidence="2 3 13">Catalyzes the hydrolytic deamination of adenosine and 2-deoxyadenosine (By similarity). Plays an important role in purine metabolism and in adenosine homeostasis (By similarity). Modulates signaling by extracellular adenosine, and so contributes indirectly to cellular signaling events (By similarity). Acts as a positive regulator of T-cell coactivation, by binding DPP4 (By similarity). Its interaction with DPP4 regulates lymphocyte-epithelial cell adhesion (By similarity). Enhances dendritic cell immunogenicity by affecting dendritic cell costimulatory molecule expression and cytokines and chemokines secretion (PubMed:23240012). Enhances CD4+ T-cell differentiation and proliferation (By similarity). Acts as a positive modulator of adenosine receptors ADORA1 and ADORA2A, by enhancing their ligand affinity via conformational change (By similarity). Stimulates plasminogen activation (By similarity). Plays a role in male fertility (By similarity). Plays a protective role in early postimplantation embryonic development (By similarity). Also responsible for the deamination of cordycepin (3'-deoxyadenosine), a fungal natural product that shows antitumor, antibacterial, antifungal, antivirus, and immune regulation properties (By similarity).</text>
</comment>
<comment type="catalytic activity">
    <reaction evidence="2">
        <text>adenosine + H2O + H(+) = inosine + NH4(+)</text>
        <dbReference type="Rhea" id="RHEA:24408"/>
        <dbReference type="ChEBI" id="CHEBI:15377"/>
        <dbReference type="ChEBI" id="CHEBI:15378"/>
        <dbReference type="ChEBI" id="CHEBI:16335"/>
        <dbReference type="ChEBI" id="CHEBI:17596"/>
        <dbReference type="ChEBI" id="CHEBI:28938"/>
        <dbReference type="EC" id="3.5.4.4"/>
    </reaction>
    <physiologicalReaction direction="left-to-right" evidence="2">
        <dbReference type="Rhea" id="RHEA:24409"/>
    </physiologicalReaction>
</comment>
<comment type="catalytic activity">
    <reaction evidence="2">
        <text>2'-deoxyadenosine + H2O + H(+) = 2'-deoxyinosine + NH4(+)</text>
        <dbReference type="Rhea" id="RHEA:28190"/>
        <dbReference type="ChEBI" id="CHEBI:15377"/>
        <dbReference type="ChEBI" id="CHEBI:15378"/>
        <dbReference type="ChEBI" id="CHEBI:17256"/>
        <dbReference type="ChEBI" id="CHEBI:28938"/>
        <dbReference type="ChEBI" id="CHEBI:28997"/>
        <dbReference type="EC" id="3.5.4.4"/>
    </reaction>
    <physiologicalReaction direction="left-to-right" evidence="2">
        <dbReference type="Rhea" id="RHEA:28191"/>
    </physiologicalReaction>
</comment>
<comment type="catalytic activity">
    <reaction evidence="2">
        <text>cordycepin + H2O + H(+) = 3'-deoxyinosine + NH4(+)</text>
        <dbReference type="Rhea" id="RHEA:79047"/>
        <dbReference type="ChEBI" id="CHEBI:15377"/>
        <dbReference type="ChEBI" id="CHEBI:15378"/>
        <dbReference type="ChEBI" id="CHEBI:28938"/>
        <dbReference type="ChEBI" id="CHEBI:29014"/>
        <dbReference type="ChEBI" id="CHEBI:229694"/>
    </reaction>
    <physiologicalReaction direction="left-to-right" evidence="2">
        <dbReference type="Rhea" id="RHEA:79048"/>
    </physiologicalReaction>
</comment>
<comment type="cofactor">
    <cofactor evidence="4 5 7 10">
        <name>Zn(2+)</name>
        <dbReference type="ChEBI" id="CHEBI:29105"/>
    </cofactor>
    <text evidence="4">Binds 1 zinc ion per subunit.</text>
</comment>
<comment type="subunit">
    <text evidence="2">Interacts with DPP4 (via extracellular domain). Interacts with PLG (via Kringle 4 domain); the interaction stimulates PLG activation when in complex with DPP4.</text>
</comment>
<comment type="interaction">
    <interactant intactId="EBI-7475530">
        <id>P56658</id>
    </interactant>
    <interactant intactId="EBI-2871277">
        <id>P27487</id>
        <label>DPP4</label>
    </interactant>
    <organismsDiffer>true</organismsDiffer>
    <experiments>5</experiments>
</comment>
<comment type="subcellular location">
    <subcellularLocation>
        <location evidence="2">Cell membrane</location>
        <topology evidence="1">Peripheral membrane protein</topology>
        <orientation evidence="1">Extracellular side</orientation>
    </subcellularLocation>
    <subcellularLocation>
        <location evidence="2">Cell junction</location>
    </subcellularLocation>
    <subcellularLocation>
        <location evidence="3">Cytoplasmic vesicle lumen</location>
    </subcellularLocation>
    <subcellularLocation>
        <location evidence="1">Cytoplasm</location>
    </subcellularLocation>
    <subcellularLocation>
        <location evidence="2">Lysosome</location>
    </subcellularLocation>
    <text evidence="2">Colocalized with DPP4 at the cell surface.</text>
</comment>
<comment type="tissue specificity">
    <text evidence="13">Expressed in gastrointestinal tissues (at protein level).</text>
</comment>
<comment type="mass spectrometry" mass="40549.0" error="16.0" method="Electrospray" evidence="14"/>
<comment type="pharmaceutical">
    <text>Available under the name Adagen (Enzon). This is a PEG-conjugated form (pegademase). Used to treat patients with severe combined immunodeficiency diseases (SCID).</text>
</comment>
<comment type="similarity">
    <text evidence="15">Belongs to the metallo-dependent hydrolases superfamily. Adenosine and AMP deaminases family.</text>
</comment>
<proteinExistence type="evidence at protein level"/>
<keyword id="KW-0002">3D-structure</keyword>
<keyword id="KW-0007">Acetylation</keyword>
<keyword id="KW-0130">Cell adhesion</keyword>
<keyword id="KW-0965">Cell junction</keyword>
<keyword id="KW-1003">Cell membrane</keyword>
<keyword id="KW-0963">Cytoplasm</keyword>
<keyword id="KW-0968">Cytoplasmic vesicle</keyword>
<keyword id="KW-0903">Direct protein sequencing</keyword>
<keyword id="KW-0378">Hydrolase</keyword>
<keyword id="KW-0458">Lysosome</keyword>
<keyword id="KW-0472">Membrane</keyword>
<keyword id="KW-0479">Metal-binding</keyword>
<keyword id="KW-0546">Nucleotide metabolism</keyword>
<keyword id="KW-0582">Pharmaceutical</keyword>
<keyword id="KW-1185">Reference proteome</keyword>
<keyword id="KW-0862">Zinc</keyword>
<dbReference type="EC" id="3.5.4.4" evidence="2"/>
<dbReference type="EMBL" id="AF280603">
    <property type="protein sequence ID" value="AAF91430.1"/>
    <property type="molecule type" value="mRNA"/>
</dbReference>
<dbReference type="RefSeq" id="NP_776312.1">
    <property type="nucleotide sequence ID" value="NM_173887.2"/>
</dbReference>
<dbReference type="PDB" id="1KRM">
    <property type="method" value="X-ray"/>
    <property type="resolution" value="2.50 A"/>
    <property type="chains" value="A=2-357"/>
</dbReference>
<dbReference type="PDB" id="1NDV">
    <property type="method" value="X-ray"/>
    <property type="resolution" value="2.30 A"/>
    <property type="chains" value="A=2-357"/>
</dbReference>
<dbReference type="PDB" id="1NDW">
    <property type="method" value="X-ray"/>
    <property type="resolution" value="2.00 A"/>
    <property type="chains" value="A=2-357"/>
</dbReference>
<dbReference type="PDB" id="1NDY">
    <property type="method" value="X-ray"/>
    <property type="resolution" value="2.00 A"/>
    <property type="chains" value="A=2-357"/>
</dbReference>
<dbReference type="PDB" id="1NDZ">
    <property type="method" value="X-ray"/>
    <property type="resolution" value="2.00 A"/>
    <property type="chains" value="A=2-357"/>
</dbReference>
<dbReference type="PDB" id="1O5R">
    <property type="method" value="X-ray"/>
    <property type="resolution" value="2.35 A"/>
    <property type="chains" value="A=2-357"/>
</dbReference>
<dbReference type="PDB" id="1QXL">
    <property type="method" value="X-ray"/>
    <property type="resolution" value="2.25 A"/>
    <property type="chains" value="A=2-357"/>
</dbReference>
<dbReference type="PDB" id="1UML">
    <property type="method" value="X-ray"/>
    <property type="resolution" value="2.50 A"/>
    <property type="chains" value="A=2-357"/>
</dbReference>
<dbReference type="PDB" id="1V79">
    <property type="method" value="X-ray"/>
    <property type="resolution" value="2.50 A"/>
    <property type="chains" value="A=2-357"/>
</dbReference>
<dbReference type="PDB" id="1V7A">
    <property type="method" value="X-ray"/>
    <property type="resolution" value="2.50 A"/>
    <property type="chains" value="A=2-357"/>
</dbReference>
<dbReference type="PDB" id="1VFL">
    <property type="method" value="X-ray"/>
    <property type="resolution" value="1.80 A"/>
    <property type="chains" value="A=2-357"/>
</dbReference>
<dbReference type="PDB" id="1W1I">
    <property type="method" value="X-ray"/>
    <property type="resolution" value="3.03 A"/>
    <property type="chains" value="E/F/G/H=1-357"/>
</dbReference>
<dbReference type="PDB" id="1WXY">
    <property type="method" value="X-ray"/>
    <property type="resolution" value="2.50 A"/>
    <property type="chains" value="A=2-357"/>
</dbReference>
<dbReference type="PDB" id="1WXZ">
    <property type="method" value="X-ray"/>
    <property type="resolution" value="2.80 A"/>
    <property type="chains" value="A=2-357"/>
</dbReference>
<dbReference type="PDB" id="2BGN">
    <property type="method" value="X-ray"/>
    <property type="resolution" value="3.15 A"/>
    <property type="chains" value="E/F/G/H=2-363"/>
</dbReference>
<dbReference type="PDB" id="2E1W">
    <property type="method" value="X-ray"/>
    <property type="resolution" value="2.50 A"/>
    <property type="chains" value="A=2-357"/>
</dbReference>
<dbReference type="PDB" id="2Z7G">
    <property type="method" value="X-ray"/>
    <property type="resolution" value="2.52 A"/>
    <property type="chains" value="A=2-357"/>
</dbReference>
<dbReference type="PDBsum" id="1KRM"/>
<dbReference type="PDBsum" id="1NDV"/>
<dbReference type="PDBsum" id="1NDW"/>
<dbReference type="PDBsum" id="1NDY"/>
<dbReference type="PDBsum" id="1NDZ"/>
<dbReference type="PDBsum" id="1O5R"/>
<dbReference type="PDBsum" id="1QXL"/>
<dbReference type="PDBsum" id="1UML"/>
<dbReference type="PDBsum" id="1V79"/>
<dbReference type="PDBsum" id="1V7A"/>
<dbReference type="PDBsum" id="1VFL"/>
<dbReference type="PDBsum" id="1W1I"/>
<dbReference type="PDBsum" id="1WXY"/>
<dbReference type="PDBsum" id="1WXZ"/>
<dbReference type="PDBsum" id="2BGN"/>
<dbReference type="PDBsum" id="2E1W"/>
<dbReference type="PDBsum" id="2Z7G"/>
<dbReference type="SMR" id="P56658"/>
<dbReference type="FunCoup" id="P56658">
    <property type="interactions" value="676"/>
</dbReference>
<dbReference type="IntAct" id="P56658">
    <property type="interactions" value="1"/>
</dbReference>
<dbReference type="MINT" id="P56658"/>
<dbReference type="STRING" id="9913.ENSBTAP00000065615"/>
<dbReference type="BindingDB" id="P56658"/>
<dbReference type="ChEMBL" id="CHEMBL2966"/>
<dbReference type="DrugCentral" id="P56658"/>
<dbReference type="PaxDb" id="9913-ENSBTAP00000006947"/>
<dbReference type="PeptideAtlas" id="P56658"/>
<dbReference type="GeneID" id="280712"/>
<dbReference type="KEGG" id="bta:280712"/>
<dbReference type="CTD" id="100"/>
<dbReference type="eggNOG" id="KOG1097">
    <property type="taxonomic scope" value="Eukaryota"/>
</dbReference>
<dbReference type="InParanoid" id="P56658"/>
<dbReference type="OrthoDB" id="272271at2759"/>
<dbReference type="BRENDA" id="3.5.4.4">
    <property type="organism ID" value="908"/>
</dbReference>
<dbReference type="EvolutionaryTrace" id="P56658"/>
<dbReference type="PRO" id="PR:P56658"/>
<dbReference type="Proteomes" id="UP000009136">
    <property type="component" value="Unplaced"/>
</dbReference>
<dbReference type="GO" id="GO:0070161">
    <property type="term" value="C:anchoring junction"/>
    <property type="evidence" value="ECO:0007669"/>
    <property type="project" value="UniProtKB-SubCell"/>
</dbReference>
<dbReference type="GO" id="GO:0060205">
    <property type="term" value="C:cytoplasmic vesicle lumen"/>
    <property type="evidence" value="ECO:0007669"/>
    <property type="project" value="UniProtKB-SubCell"/>
</dbReference>
<dbReference type="GO" id="GO:0005829">
    <property type="term" value="C:cytosol"/>
    <property type="evidence" value="ECO:0000318"/>
    <property type="project" value="GO_Central"/>
</dbReference>
<dbReference type="GO" id="GO:0009897">
    <property type="term" value="C:external side of plasma membrane"/>
    <property type="evidence" value="ECO:0000318"/>
    <property type="project" value="GO_Central"/>
</dbReference>
<dbReference type="GO" id="GO:0005764">
    <property type="term" value="C:lysosome"/>
    <property type="evidence" value="ECO:0007669"/>
    <property type="project" value="UniProtKB-SubCell"/>
</dbReference>
<dbReference type="GO" id="GO:0046936">
    <property type="term" value="F:2'-deoxyadenosine deaminase activity"/>
    <property type="evidence" value="ECO:0007669"/>
    <property type="project" value="RHEA"/>
</dbReference>
<dbReference type="GO" id="GO:0004000">
    <property type="term" value="F:adenosine deaminase activity"/>
    <property type="evidence" value="ECO:0000250"/>
    <property type="project" value="UniProtKB"/>
</dbReference>
<dbReference type="GO" id="GO:0008270">
    <property type="term" value="F:zinc ion binding"/>
    <property type="evidence" value="ECO:0000250"/>
    <property type="project" value="UniProtKB"/>
</dbReference>
<dbReference type="GO" id="GO:0006154">
    <property type="term" value="P:adenosine catabolic process"/>
    <property type="evidence" value="ECO:0000250"/>
    <property type="project" value="UniProtKB"/>
</dbReference>
<dbReference type="GO" id="GO:0007155">
    <property type="term" value="P:cell adhesion"/>
    <property type="evidence" value="ECO:0007669"/>
    <property type="project" value="UniProtKB-KW"/>
</dbReference>
<dbReference type="GO" id="GO:0043103">
    <property type="term" value="P:hypoxanthine salvage"/>
    <property type="evidence" value="ECO:0000318"/>
    <property type="project" value="GO_Central"/>
</dbReference>
<dbReference type="GO" id="GO:0046103">
    <property type="term" value="P:inosine biosynthetic process"/>
    <property type="evidence" value="ECO:0000250"/>
    <property type="project" value="UniProtKB"/>
</dbReference>
<dbReference type="GO" id="GO:0060169">
    <property type="term" value="P:negative regulation of adenosine receptor signaling pathway"/>
    <property type="evidence" value="ECO:0000318"/>
    <property type="project" value="GO_Central"/>
</dbReference>
<dbReference type="GO" id="GO:0009117">
    <property type="term" value="P:nucleotide metabolic process"/>
    <property type="evidence" value="ECO:0007669"/>
    <property type="project" value="UniProtKB-KW"/>
</dbReference>
<dbReference type="GO" id="GO:0009168">
    <property type="term" value="P:purine ribonucleoside monophosphate biosynthetic process"/>
    <property type="evidence" value="ECO:0007669"/>
    <property type="project" value="InterPro"/>
</dbReference>
<dbReference type="GO" id="GO:0042110">
    <property type="term" value="P:T cell activation"/>
    <property type="evidence" value="ECO:0000318"/>
    <property type="project" value="GO_Central"/>
</dbReference>
<dbReference type="CDD" id="cd01320">
    <property type="entry name" value="ADA"/>
    <property type="match status" value="1"/>
</dbReference>
<dbReference type="FunFam" id="3.20.20.140:FF:000038">
    <property type="entry name" value="Adenosine deaminase"/>
    <property type="match status" value="1"/>
</dbReference>
<dbReference type="Gene3D" id="3.20.20.140">
    <property type="entry name" value="Metal-dependent hydrolases"/>
    <property type="match status" value="1"/>
</dbReference>
<dbReference type="HAMAP" id="MF_00540">
    <property type="entry name" value="A_deaminase"/>
    <property type="match status" value="1"/>
</dbReference>
<dbReference type="InterPro" id="IPR006650">
    <property type="entry name" value="A/AMP_deam_AS"/>
</dbReference>
<dbReference type="InterPro" id="IPR028893">
    <property type="entry name" value="A_deaminase"/>
</dbReference>
<dbReference type="InterPro" id="IPR001365">
    <property type="entry name" value="A_deaminase_dom"/>
</dbReference>
<dbReference type="InterPro" id="IPR006330">
    <property type="entry name" value="Ado/ade_deaminase"/>
</dbReference>
<dbReference type="InterPro" id="IPR032466">
    <property type="entry name" value="Metal_Hydrolase"/>
</dbReference>
<dbReference type="NCBIfam" id="TIGR01430">
    <property type="entry name" value="aden_deam"/>
    <property type="match status" value="1"/>
</dbReference>
<dbReference type="PANTHER" id="PTHR11409">
    <property type="entry name" value="ADENOSINE DEAMINASE"/>
    <property type="match status" value="1"/>
</dbReference>
<dbReference type="PANTHER" id="PTHR11409:SF43">
    <property type="entry name" value="ADENOSINE DEAMINASE"/>
    <property type="match status" value="1"/>
</dbReference>
<dbReference type="Pfam" id="PF00962">
    <property type="entry name" value="A_deaminase"/>
    <property type="match status" value="1"/>
</dbReference>
<dbReference type="SUPFAM" id="SSF51556">
    <property type="entry name" value="Metallo-dependent hydrolases"/>
    <property type="match status" value="1"/>
</dbReference>
<dbReference type="PROSITE" id="PS00485">
    <property type="entry name" value="A_DEAMINASE"/>
    <property type="match status" value="1"/>
</dbReference>
<accession>P56658</accession>
<accession>Q9MYY1</accession>
<name>ADA_BOVIN</name>
<feature type="initiator methionine" description="Removed" evidence="2 14">
    <location>
        <position position="1"/>
    </location>
</feature>
<feature type="chain" id="PRO_0000194351" description="Adenosine deaminase">
    <location>
        <begin position="2"/>
        <end position="363"/>
    </location>
</feature>
<feature type="active site" description="Proton donor" evidence="3">
    <location>
        <position position="217"/>
    </location>
</feature>
<feature type="binding site" evidence="4 5 6 7 8 9 10 11 12 16 17 18 19 20 21 22 23">
    <location>
        <position position="15"/>
    </location>
    <ligand>
        <name>Zn(2+)</name>
        <dbReference type="ChEBI" id="CHEBI:29105"/>
        <note>catalytic</note>
    </ligand>
</feature>
<feature type="binding site" evidence="4 5 6 8 10 12 18 19 20 21 22">
    <location>
        <position position="17"/>
    </location>
    <ligand>
        <name>substrate</name>
    </ligand>
</feature>
<feature type="binding site" evidence="4 5 6 7 8 9 10 11 12 16 17 18 19 20 21 22 23">
    <location>
        <position position="17"/>
    </location>
    <ligand>
        <name>Zn(2+)</name>
        <dbReference type="ChEBI" id="CHEBI:29105"/>
        <note>catalytic</note>
    </ligand>
</feature>
<feature type="binding site" evidence="4 5 6 8 10 11 12 18 19 20 21 22">
    <location>
        <position position="19"/>
    </location>
    <ligand>
        <name>substrate</name>
    </ligand>
</feature>
<feature type="binding site" evidence="5 11 19 24">
    <location>
        <position position="184"/>
    </location>
    <ligand>
        <name>substrate</name>
    </ligand>
</feature>
<feature type="binding site" evidence="4 5 6 7 8 9 10 11 12 16 17 18 19 20 21 22 23">
    <location>
        <position position="214"/>
    </location>
    <ligand>
        <name>Zn(2+)</name>
        <dbReference type="ChEBI" id="CHEBI:29105"/>
        <note>catalytic</note>
    </ligand>
</feature>
<feature type="binding site" evidence="4 5 6 7 8 9 10 11 12 16 17 18 19 20 21 22 23">
    <location>
        <position position="295"/>
    </location>
    <ligand>
        <name>Zn(2+)</name>
        <dbReference type="ChEBI" id="CHEBI:29105"/>
        <note>catalytic</note>
    </ligand>
</feature>
<feature type="binding site" evidence="4 5 6 8 10 12 18 19 20 21 22">
    <location>
        <position position="296"/>
    </location>
    <ligand>
        <name>substrate</name>
    </ligand>
</feature>
<feature type="site" description="Important for interaction with adenosine receptors and increasing their affinity for agonists" evidence="2">
    <location>
        <position position="58"/>
    </location>
</feature>
<feature type="site" description="Important for interaction with adenosine receptors and increasing their affinity for agonists" evidence="2">
    <location>
        <position position="62"/>
    </location>
</feature>
<feature type="site" description="Important for catalytic activity" evidence="3">
    <location>
        <position position="238"/>
    </location>
</feature>
<feature type="modified residue" description="N-acetylalanine" evidence="2">
    <location>
        <position position="2"/>
    </location>
</feature>
<feature type="modified residue" description="N6-acetyllysine" evidence="2">
    <location>
        <position position="54"/>
    </location>
</feature>
<feature type="modified residue" description="N6-acetyllysine" evidence="2">
    <location>
        <position position="232"/>
    </location>
</feature>
<feature type="sequence variant">
    <original>K</original>
    <variation>Q</variation>
    <location>
        <position position="199"/>
    </location>
</feature>
<feature type="sequence variant">
    <original>A</original>
    <variation>T</variation>
    <location>
        <position position="246"/>
    </location>
</feature>
<feature type="sequence variant">
    <original>G</original>
    <variation>R</variation>
    <location>
        <position position="352"/>
    </location>
</feature>
<feature type="sequence conflict" description="In Ref. 2; AA sequence." evidence="15" ref="2">
    <original>N</original>
    <variation>D</variation>
    <location>
        <position position="8"/>
    </location>
</feature>
<feature type="sequence conflict" description="In Ref. 2; AA sequence." evidence="15" ref="2">
    <original>RK</original>
    <variation>KR</variation>
    <location>
        <begin position="32"/>
        <end position="33"/>
    </location>
</feature>
<feature type="sequence conflict" description="In Ref. 2; AA sequence." evidence="15" ref="2">
    <original>S</original>
    <variation>T</variation>
    <location>
        <position position="57"/>
    </location>
</feature>
<feature type="sequence conflict" description="In Ref. 2; AA sequence." evidence="15" ref="2">
    <original>E</original>
    <variation>D</variation>
    <location>
        <position position="60"/>
    </location>
</feature>
<feature type="sequence conflict" description="In Ref. 2; AA sequence." evidence="15" ref="2">
    <original>EAV</original>
    <variation>DAI</variation>
    <location>
        <begin position="77"/>
        <end position="79"/>
    </location>
</feature>
<feature type="sequence conflict" description="In Ref. 2; AA sequence." evidence="15" ref="2">
    <original>V</original>
    <variation>I</variation>
    <location>
        <position position="261"/>
    </location>
</feature>
<feature type="sequence conflict" description="In Ref. 2; AA sequence." evidence="15" ref="2">
    <original>PVV</original>
    <variation>AVI</variation>
    <location>
        <begin position="279"/>
        <end position="281"/>
    </location>
</feature>
<feature type="sequence conflict" description="In Ref. 2; AA sequence." evidence="15" ref="2">
    <original>NE</original>
    <variation>KD</variation>
    <location>
        <begin position="313"/>
        <end position="314"/>
    </location>
</feature>
<feature type="strand" evidence="27">
    <location>
        <begin position="11"/>
        <end position="13"/>
    </location>
</feature>
<feature type="helix" evidence="27">
    <location>
        <begin position="18"/>
        <end position="20"/>
    </location>
</feature>
<feature type="helix" evidence="27">
    <location>
        <begin position="24"/>
        <end position="33"/>
    </location>
</feature>
<feature type="helix" evidence="27">
    <location>
        <begin position="43"/>
        <end position="50"/>
    </location>
</feature>
<feature type="helix" evidence="27">
    <location>
        <begin position="58"/>
        <end position="72"/>
    </location>
</feature>
<feature type="helix" evidence="27">
    <location>
        <begin position="76"/>
        <end position="92"/>
    </location>
</feature>
<feature type="strand" evidence="27">
    <location>
        <begin position="95"/>
        <end position="102"/>
    </location>
</feature>
<feature type="helix" evidence="27">
    <location>
        <begin position="105"/>
        <end position="107"/>
    </location>
</feature>
<feature type="strand" evidence="25">
    <location>
        <begin position="109"/>
        <end position="111"/>
    </location>
</feature>
<feature type="helix" evidence="27">
    <location>
        <begin position="116"/>
        <end position="118"/>
    </location>
</feature>
<feature type="helix" evidence="27">
    <location>
        <begin position="126"/>
        <end position="144"/>
    </location>
</feature>
<feature type="strand" evidence="27">
    <location>
        <begin position="147"/>
        <end position="155"/>
    </location>
</feature>
<feature type="helix" evidence="27">
    <location>
        <begin position="159"/>
        <end position="161"/>
    </location>
</feature>
<feature type="helix" evidence="27">
    <location>
        <begin position="162"/>
        <end position="171"/>
    </location>
</feature>
<feature type="turn" evidence="27">
    <location>
        <begin position="174"/>
        <end position="176"/>
    </location>
</feature>
<feature type="strand" evidence="27">
    <location>
        <begin position="177"/>
        <end position="184"/>
    </location>
</feature>
<feature type="helix" evidence="27">
    <location>
        <begin position="191"/>
        <end position="193"/>
    </location>
</feature>
<feature type="helix" evidence="27">
    <location>
        <begin position="195"/>
        <end position="207"/>
    </location>
</feature>
<feature type="strand" evidence="27">
    <location>
        <begin position="210"/>
        <end position="219"/>
    </location>
</feature>
<feature type="helix" evidence="27">
    <location>
        <begin position="221"/>
        <end position="229"/>
    </location>
</feature>
<feature type="strand" evidence="27">
    <location>
        <begin position="234"/>
        <end position="238"/>
    </location>
</feature>
<feature type="helix" evidence="27">
    <location>
        <begin position="240"/>
        <end position="244"/>
    </location>
</feature>
<feature type="helix" evidence="27">
    <location>
        <begin position="246"/>
        <end position="254"/>
    </location>
</feature>
<feature type="strand" evidence="27">
    <location>
        <begin position="258"/>
        <end position="261"/>
    </location>
</feature>
<feature type="helix" evidence="27">
    <location>
        <begin position="263"/>
        <end position="269"/>
    </location>
</feature>
<feature type="strand" evidence="27">
    <location>
        <begin position="270"/>
        <end position="272"/>
    </location>
</feature>
<feature type="helix" evidence="27">
    <location>
        <begin position="279"/>
        <end position="285"/>
    </location>
</feature>
<feature type="strand" evidence="27">
    <location>
        <begin position="289"/>
        <end position="292"/>
    </location>
</feature>
<feature type="helix" evidence="27">
    <location>
        <begin position="297"/>
        <end position="300"/>
    </location>
</feature>
<feature type="helix" evidence="27">
    <location>
        <begin position="304"/>
        <end position="313"/>
    </location>
</feature>
<feature type="helix" evidence="27">
    <location>
        <begin position="319"/>
        <end position="331"/>
    </location>
</feature>
<feature type="strand" evidence="26">
    <location>
        <begin position="333"/>
        <end position="335"/>
    </location>
</feature>
<feature type="helix" evidence="27">
    <location>
        <begin position="337"/>
        <end position="351"/>
    </location>
</feature>
<protein>
    <recommendedName>
        <fullName>Adenosine deaminase</fullName>
        <ecNumber evidence="2">3.5.4.4</ecNumber>
    </recommendedName>
    <alternativeName>
        <fullName>Adenosine aminohydrolase</fullName>
    </alternativeName>
</protein>